<comment type="function">
    <text evidence="1 2">Catalyzes the NAD(P)H-dependent reduction of imine double bonds of a number of cyclic ketimine substrates, including sulfur-containing cyclic ketimines. Under physiological conditions, it efficiently catalyzes delta(1)-piperideine-2-carboxylate (P2C) and delta(1)-pyrroline-2-carboxylate (Pyr2C) reduction, suggesting a central role in lysine and glutamate metabolism. Additional substrates are delta(2)-thiazoline-2-carboxylate (T2C), 3,4-dehydrothiomorpholine-3-carboxylate (AECK), and (R)-lanthionine ketimine (LK) that is reduced at very low rate compared to other substrates (By similarity). Also catalyzes the NAD(P)H-dependent reduction of (S)-cystathionine ketimine (CysK) (By similarity).</text>
</comment>
<comment type="catalytic activity">
    <reaction evidence="1">
        <text>L-pipecolate + NADP(+) = Delta(1)-piperideine-2-carboxylate + NADPH + H(+)</text>
        <dbReference type="Rhea" id="RHEA:12524"/>
        <dbReference type="ChEBI" id="CHEBI:15378"/>
        <dbReference type="ChEBI" id="CHEBI:57783"/>
        <dbReference type="ChEBI" id="CHEBI:58349"/>
        <dbReference type="ChEBI" id="CHEBI:61185"/>
        <dbReference type="ChEBI" id="CHEBI:77631"/>
        <dbReference type="EC" id="1.5.1.1"/>
    </reaction>
    <physiologicalReaction direction="right-to-left" evidence="1">
        <dbReference type="Rhea" id="RHEA:12526"/>
    </physiologicalReaction>
</comment>
<comment type="catalytic activity">
    <reaction evidence="2">
        <text>L-pipecolate + NAD(+) = Delta(1)-piperideine-2-carboxylate + NADH + H(+)</text>
        <dbReference type="Rhea" id="RHEA:30807"/>
        <dbReference type="ChEBI" id="CHEBI:15378"/>
        <dbReference type="ChEBI" id="CHEBI:57540"/>
        <dbReference type="ChEBI" id="CHEBI:57945"/>
        <dbReference type="ChEBI" id="CHEBI:61185"/>
        <dbReference type="ChEBI" id="CHEBI:77631"/>
        <dbReference type="EC" id="1.5.1.1"/>
    </reaction>
    <physiologicalReaction direction="right-to-left" evidence="2">
        <dbReference type="Rhea" id="RHEA:30809"/>
    </physiologicalReaction>
</comment>
<comment type="catalytic activity">
    <reaction evidence="1">
        <text>L-proline + NADP(+) = 1-pyrroline-2-carboxylate + NADPH + H(+)</text>
        <dbReference type="Rhea" id="RHEA:20317"/>
        <dbReference type="ChEBI" id="CHEBI:15378"/>
        <dbReference type="ChEBI" id="CHEBI:39785"/>
        <dbReference type="ChEBI" id="CHEBI:57783"/>
        <dbReference type="ChEBI" id="CHEBI:58349"/>
        <dbReference type="ChEBI" id="CHEBI:60039"/>
        <dbReference type="EC" id="1.5.1.1"/>
    </reaction>
    <physiologicalReaction direction="right-to-left" evidence="1">
        <dbReference type="Rhea" id="RHEA:20319"/>
    </physiologicalReaction>
</comment>
<comment type="catalytic activity">
    <reaction evidence="1">
        <text>L-proline + NAD(+) = 1-pyrroline-2-carboxylate + NADH + H(+)</text>
        <dbReference type="Rhea" id="RHEA:20321"/>
        <dbReference type="ChEBI" id="CHEBI:15378"/>
        <dbReference type="ChEBI" id="CHEBI:39785"/>
        <dbReference type="ChEBI" id="CHEBI:57540"/>
        <dbReference type="ChEBI" id="CHEBI:57945"/>
        <dbReference type="ChEBI" id="CHEBI:60039"/>
        <dbReference type="EC" id="1.5.1.1"/>
    </reaction>
    <physiologicalReaction direction="right-to-left" evidence="1">
        <dbReference type="Rhea" id="RHEA:20323"/>
    </physiologicalReaction>
</comment>
<comment type="catalytic activity">
    <reaction evidence="1">
        <text>(3R)-1,4-thiomorpholine-3-carboxylate + NAD(+) = 3,4-dehydrothiomorpholine-3-carboxylate + NADH + 2 H(+)</text>
        <dbReference type="Rhea" id="RHEA:12504"/>
        <dbReference type="ChEBI" id="CHEBI:15378"/>
        <dbReference type="ChEBI" id="CHEBI:57540"/>
        <dbReference type="ChEBI" id="CHEBI:57945"/>
        <dbReference type="ChEBI" id="CHEBI:58517"/>
        <dbReference type="ChEBI" id="CHEBI:176873"/>
        <dbReference type="EC" id="1.5.1.25"/>
    </reaction>
    <physiologicalReaction direction="right-to-left" evidence="1">
        <dbReference type="Rhea" id="RHEA:12506"/>
    </physiologicalReaction>
</comment>
<comment type="catalytic activity">
    <reaction evidence="1">
        <text>(3R)-1,4-thiomorpholine-3-carboxylate + NADP(+) = 3,4-dehydrothiomorpholine-3-carboxylate + NADPH + 2 H(+)</text>
        <dbReference type="Rhea" id="RHEA:12500"/>
        <dbReference type="ChEBI" id="CHEBI:15378"/>
        <dbReference type="ChEBI" id="CHEBI:57783"/>
        <dbReference type="ChEBI" id="CHEBI:58349"/>
        <dbReference type="ChEBI" id="CHEBI:58517"/>
        <dbReference type="ChEBI" id="CHEBI:176873"/>
        <dbReference type="EC" id="1.5.1.25"/>
    </reaction>
    <physiologicalReaction direction="right-to-left" evidence="1">
        <dbReference type="Rhea" id="RHEA:12502"/>
    </physiologicalReaction>
</comment>
<comment type="catalytic activity">
    <reaction evidence="2">
        <text>(S)-cystathionine ketimine + NADH + 2 H(+) = (3R,5S)-2,3,5,6,7-pentahydro-1,4-thiazepine-3,5-dicarboxylate + NAD(+)</text>
        <dbReference type="Rhea" id="RHEA:68032"/>
        <dbReference type="ChEBI" id="CHEBI:15378"/>
        <dbReference type="ChEBI" id="CHEBI:57540"/>
        <dbReference type="ChEBI" id="CHEBI:57945"/>
        <dbReference type="ChEBI" id="CHEBI:176808"/>
        <dbReference type="ChEBI" id="CHEBI:176810"/>
    </reaction>
    <physiologicalReaction direction="left-to-right" evidence="2">
        <dbReference type="Rhea" id="RHEA:68033"/>
    </physiologicalReaction>
</comment>
<comment type="catalytic activity">
    <reaction evidence="2">
        <text>(S)-cystathionine ketimine + NADPH + 2 H(+) = (3R,5S)-2,3,5,6,7-pentahydro-1,4-thiazepine-3,5-dicarboxylate + NADP(+)</text>
        <dbReference type="Rhea" id="RHEA:68036"/>
        <dbReference type="ChEBI" id="CHEBI:15378"/>
        <dbReference type="ChEBI" id="CHEBI:57783"/>
        <dbReference type="ChEBI" id="CHEBI:58349"/>
        <dbReference type="ChEBI" id="CHEBI:176808"/>
        <dbReference type="ChEBI" id="CHEBI:176810"/>
    </reaction>
    <physiologicalReaction direction="left-to-right" evidence="2">
        <dbReference type="Rhea" id="RHEA:68037"/>
    </physiologicalReaction>
</comment>
<comment type="catalytic activity">
    <reaction evidence="1">
        <text>(R)-lanthionine ketimine + NADPH + 2 H(+) = (3R,5R)-1,4-thiomorpholine-3,5-dicarboxylate + NADP(+)</text>
        <dbReference type="Rhea" id="RHEA:68040"/>
        <dbReference type="ChEBI" id="CHEBI:15378"/>
        <dbReference type="ChEBI" id="CHEBI:57783"/>
        <dbReference type="ChEBI" id="CHEBI:58349"/>
        <dbReference type="ChEBI" id="CHEBI:176891"/>
        <dbReference type="ChEBI" id="CHEBI:176892"/>
    </reaction>
    <physiologicalReaction direction="left-to-right" evidence="1">
        <dbReference type="Rhea" id="RHEA:68041"/>
    </physiologicalReaction>
</comment>
<comment type="catalytic activity">
    <reaction evidence="1">
        <text>Delta(2)-thiazoline-2-carboxylate + NADPH + 2 H(+) = L-thiazolidine-2-carboxylate + NADP(+)</text>
        <dbReference type="Rhea" id="RHEA:68072"/>
        <dbReference type="ChEBI" id="CHEBI:15378"/>
        <dbReference type="ChEBI" id="CHEBI:57783"/>
        <dbReference type="ChEBI" id="CHEBI:58349"/>
        <dbReference type="ChEBI" id="CHEBI:176895"/>
        <dbReference type="ChEBI" id="CHEBI:176896"/>
    </reaction>
    <physiologicalReaction direction="left-to-right" evidence="1">
        <dbReference type="Rhea" id="RHEA:68073"/>
    </physiologicalReaction>
</comment>
<comment type="subunit">
    <text evidence="1 4">Homodimer (PubMed:24467707). Binds the thyroid hormone triiodothyronine (T3); T3 binding inhibits enzymatic activity (By similarity).</text>
</comment>
<comment type="subcellular location">
    <subcellularLocation>
        <location evidence="1">Cytoplasm</location>
    </subcellularLocation>
</comment>
<comment type="tissue specificity">
    <text evidence="3">Expressed in the spiral ligament of the cochlea (at protein level).</text>
</comment>
<comment type="similarity">
    <text evidence="5">Belongs to the ornithine cyclodeaminase/mu-crystallin family.</text>
</comment>
<keyword id="KW-0002">3D-structure</keyword>
<keyword id="KW-0963">Cytoplasm</keyword>
<keyword id="KW-0903">Direct protein sequencing</keyword>
<keyword id="KW-0520">NAD</keyword>
<keyword id="KW-0521">NADP</keyword>
<keyword id="KW-0560">Oxidoreductase</keyword>
<keyword id="KW-1185">Reference proteome</keyword>
<reference key="1">
    <citation type="submission" date="1997-12" db="EMBL/GenBank/DDBJ databases">
        <authorList>
            <person name="Sperbeck S.J."/>
            <person name="Segovia L."/>
            <person name="Wistow G.J."/>
        </authorList>
    </citation>
    <scope>NUCLEOTIDE SEQUENCE [MRNA]</scope>
    <source>
        <strain>FVB/N</strain>
        <tissue>Brain</tissue>
    </source>
</reference>
<reference key="2">
    <citation type="journal article" date="2004" name="Genome Res.">
        <title>The status, quality, and expansion of the NIH full-length cDNA project: the Mammalian Gene Collection (MGC).</title>
        <authorList>
            <consortium name="The MGC Project Team"/>
        </authorList>
    </citation>
    <scope>NUCLEOTIDE SEQUENCE [LARGE SCALE MRNA]</scope>
    <source>
        <strain>C57BL/6J</strain>
        <tissue>Retina</tissue>
    </source>
</reference>
<reference key="3">
    <citation type="submission" date="2007-04" db="UniProtKB">
        <authorList>
            <person name="Lubec G."/>
            <person name="Kang S.U."/>
        </authorList>
    </citation>
    <scope>PROTEIN SEQUENCE OF 4-18; 37-47; 119-128 AND 176-185</scope>
    <scope>IDENTIFICATION BY MASS SPECTROMETRY</scope>
    <source>
        <strain>C57BL/6J</strain>
        <tissue>Brain</tissue>
    </source>
</reference>
<reference key="4">
    <citation type="journal article" date="2006" name="J. Med. Genet.">
        <title>CRYM mutations cause deafness through thyroid hormone binding properties in the fibrocytes of the cochlea.</title>
        <authorList>
            <person name="Oshima A."/>
            <person name="Suzuki S."/>
            <person name="Takumi Y."/>
            <person name="Hashizume K."/>
            <person name="Abe S."/>
            <person name="Usami S."/>
        </authorList>
    </citation>
    <scope>TISSUE SPECIFICITY</scope>
</reference>
<reference key="5">
    <citation type="journal article" date="2010" name="Cell">
        <title>A tissue-specific atlas of mouse protein phosphorylation and expression.</title>
        <authorList>
            <person name="Huttlin E.L."/>
            <person name="Jedrychowski M.P."/>
            <person name="Elias J.E."/>
            <person name="Goswami T."/>
            <person name="Rad R."/>
            <person name="Beausoleil S.A."/>
            <person name="Villen J."/>
            <person name="Haas W."/>
            <person name="Sowa M.E."/>
            <person name="Gygi S.P."/>
        </authorList>
    </citation>
    <scope>IDENTIFICATION BY MASS SPECTROMETRY [LARGE SCALE ANALYSIS]</scope>
    <source>
        <tissue>Brain</tissue>
        <tissue>Heart</tissue>
        <tissue>Kidney</tissue>
        <tissue>Liver</tissue>
        <tissue>Lung</tissue>
    </source>
</reference>
<reference evidence="7 8 9" key="6">
    <citation type="journal article" date="2014" name="FEBS J.">
        <title>Crystal structure of mouse mu-crystallin complexed with NADPH and the T3 thyroid hormone.</title>
        <authorList>
            <person name="Borel F."/>
            <person name="Hachi I."/>
            <person name="Palencia A."/>
            <person name="Gaillard M.C."/>
            <person name="Ferrer J.L."/>
        </authorList>
    </citation>
    <scope>X-RAY CRYSTALLOGRAPHY (1.75 ANGSTROMS) IN COMPLEX WITH 3,5,3'TRIIODOTHYRONINE AND NADPH</scope>
    <scope>SUBUNIT</scope>
</reference>
<sequence length="313" mass="33523">MKRAPAFLSAEEVQDHLRSSSLLIPPLEAALANFSKGPDGGVMQPVRTVVPVAKHRGFLGVMPAYSAAEDALTTKLVTFYEGHSNTAVPSHQASVLLFDPSNGSLLAVMDGNVITAKRTAAVSAIATKLLKPPGSDVLCILGAGVQAYSHYEIFTEQFSFKEVRMWNRTRENAEKFASTVQGDVRVCSSVQEAVTGADVIITVTMATEPILFGEWVKPGAHINAVGASRPDWRELDDELMRQAVLYVDSREAALKESGDVLLSGADIFAELGEVISGAKPAHCEKTTVFKSLGMAVEDLVAAKLVYDSWSSGK</sequence>
<evidence type="ECO:0000250" key="1">
    <source>
        <dbReference type="UniProtKB" id="Q14894"/>
    </source>
</evidence>
<evidence type="ECO:0000250" key="2">
    <source>
        <dbReference type="UniProtKB" id="Q2KHX6"/>
    </source>
</evidence>
<evidence type="ECO:0000269" key="3">
    <source>
    </source>
</evidence>
<evidence type="ECO:0000269" key="4">
    <source>
    </source>
</evidence>
<evidence type="ECO:0000305" key="5"/>
<evidence type="ECO:0000312" key="6">
    <source>
        <dbReference type="MGI" id="MGI:102675"/>
    </source>
</evidence>
<evidence type="ECO:0007744" key="7">
    <source>
        <dbReference type="PDB" id="4BV8"/>
    </source>
</evidence>
<evidence type="ECO:0007744" key="8">
    <source>
        <dbReference type="PDB" id="4BV9"/>
    </source>
</evidence>
<evidence type="ECO:0007744" key="9">
    <source>
        <dbReference type="PDB" id="4BVA"/>
    </source>
</evidence>
<evidence type="ECO:0007829" key="10">
    <source>
        <dbReference type="PDB" id="4BVA"/>
    </source>
</evidence>
<proteinExistence type="evidence at protein level"/>
<protein>
    <recommendedName>
        <fullName evidence="1">Ketimine reductase mu-crystallin</fullName>
        <ecNumber evidence="1">1.5.1.25</ecNumber>
    </recommendedName>
    <alternativeName>
        <fullName evidence="1">1-piperideine-2-carboxylate/1-pyrroline-2-carboxylate reductase</fullName>
        <shortName evidence="1">P2C/Pyr2C reductase</shortName>
        <ecNumber evidence="1">1.5.1.1</ecNumber>
    </alternativeName>
    <alternativeName>
        <fullName evidence="1">NADP-regulated thyroid-hormone-binding protein</fullName>
    </alternativeName>
</protein>
<feature type="chain" id="PRO_0000200679" description="Ketimine reductase mu-crystallin">
    <location>
        <begin position="1"/>
        <end position="313"/>
    </location>
</feature>
<feature type="binding site" evidence="4 9">
    <location>
        <position position="47"/>
    </location>
    <ligand>
        <name>3,3',5-triiodo-L-thyronine</name>
        <dbReference type="ChEBI" id="CHEBI:533015"/>
    </ligand>
</feature>
<feature type="binding site" evidence="4 8">
    <location>
        <position position="90"/>
    </location>
    <ligand>
        <name>NADPH</name>
        <dbReference type="ChEBI" id="CHEBI:57783"/>
    </ligand>
</feature>
<feature type="binding site" evidence="4 9">
    <location>
        <position position="91"/>
    </location>
    <ligand>
        <name>NADPH</name>
        <dbReference type="ChEBI" id="CHEBI:57783"/>
    </ligand>
</feature>
<feature type="binding site" evidence="4 9">
    <location>
        <position position="118"/>
    </location>
    <ligand>
        <name>NADPH</name>
        <dbReference type="ChEBI" id="CHEBI:57783"/>
    </ligand>
</feature>
<feature type="binding site" evidence="4 8 9">
    <location>
        <position position="143"/>
    </location>
    <ligand>
        <name>NADPH</name>
        <dbReference type="ChEBI" id="CHEBI:57783"/>
    </ligand>
</feature>
<feature type="binding site" evidence="4 8 9">
    <location>
        <position position="145"/>
    </location>
    <ligand>
        <name>NADPH</name>
        <dbReference type="ChEBI" id="CHEBI:57783"/>
    </ligand>
</feature>
<feature type="binding site" evidence="4 8 9">
    <location>
        <position position="146"/>
    </location>
    <ligand>
        <name>NADPH</name>
        <dbReference type="ChEBI" id="CHEBI:57783"/>
    </ligand>
</feature>
<feature type="binding site" evidence="4 8 9">
    <location>
        <position position="167"/>
    </location>
    <ligand>
        <name>NADPH</name>
        <dbReference type="ChEBI" id="CHEBI:57783"/>
    </ligand>
</feature>
<feature type="binding site" evidence="4 8 9">
    <location>
        <position position="168"/>
    </location>
    <ligand>
        <name>NADPH</name>
        <dbReference type="ChEBI" id="CHEBI:57783"/>
    </ligand>
</feature>
<feature type="binding site" evidence="4 8 9">
    <location>
        <position position="169"/>
    </location>
    <ligand>
        <name>NADPH</name>
        <dbReference type="ChEBI" id="CHEBI:57783"/>
    </ligand>
</feature>
<feature type="binding site" evidence="4 8 9">
    <location>
        <position position="172"/>
    </location>
    <ligand>
        <name>NADPH</name>
        <dbReference type="ChEBI" id="CHEBI:57783"/>
    </ligand>
</feature>
<feature type="binding site" evidence="4 8 9">
    <location>
        <position position="204"/>
    </location>
    <ligand>
        <name>NADPH</name>
        <dbReference type="ChEBI" id="CHEBI:57783"/>
    </ligand>
</feature>
<feature type="binding site" evidence="4 8 9">
    <location>
        <position position="205"/>
    </location>
    <ligand>
        <name>NADPH</name>
        <dbReference type="ChEBI" id="CHEBI:57783"/>
    </ligand>
</feature>
<feature type="binding site" evidence="8">
    <location>
        <position position="225"/>
    </location>
    <ligand>
        <name>NADPH</name>
        <dbReference type="ChEBI" id="CHEBI:57783"/>
    </ligand>
</feature>
<feature type="binding site" evidence="9">
    <location>
        <position position="256"/>
    </location>
    <ligand>
        <name>3,3',5-triiodo-L-thyronine</name>
        <dbReference type="ChEBI" id="CHEBI:533015"/>
    </ligand>
</feature>
<feature type="binding site" evidence="8 9">
    <location>
        <position position="291"/>
    </location>
    <ligand>
        <name>NADPH</name>
        <dbReference type="ChEBI" id="CHEBI:57783"/>
    </ligand>
</feature>
<feature type="strand" evidence="10">
    <location>
        <begin position="6"/>
        <end position="8"/>
    </location>
</feature>
<feature type="helix" evidence="10">
    <location>
        <begin position="10"/>
        <end position="15"/>
    </location>
</feature>
<feature type="helix" evidence="10">
    <location>
        <begin position="20"/>
        <end position="35"/>
    </location>
</feature>
<feature type="helix" evidence="10">
    <location>
        <begin position="37"/>
        <end position="40"/>
    </location>
</feature>
<feature type="strand" evidence="10">
    <location>
        <begin position="48"/>
        <end position="52"/>
    </location>
</feature>
<feature type="helix" evidence="10">
    <location>
        <begin position="53"/>
        <end position="55"/>
    </location>
</feature>
<feature type="strand" evidence="10">
    <location>
        <begin position="57"/>
        <end position="66"/>
    </location>
</feature>
<feature type="turn" evidence="10">
    <location>
        <begin position="67"/>
        <end position="70"/>
    </location>
</feature>
<feature type="strand" evidence="10">
    <location>
        <begin position="71"/>
        <end position="80"/>
    </location>
</feature>
<feature type="strand" evidence="10">
    <location>
        <begin position="91"/>
        <end position="98"/>
    </location>
</feature>
<feature type="turn" evidence="10">
    <location>
        <begin position="100"/>
        <end position="102"/>
    </location>
</feature>
<feature type="strand" evidence="10">
    <location>
        <begin position="105"/>
        <end position="111"/>
    </location>
</feature>
<feature type="helix" evidence="10">
    <location>
        <begin position="112"/>
        <end position="130"/>
    </location>
</feature>
<feature type="strand" evidence="10">
    <location>
        <begin position="137"/>
        <end position="141"/>
    </location>
</feature>
<feature type="helix" evidence="10">
    <location>
        <begin position="145"/>
        <end position="157"/>
    </location>
</feature>
<feature type="strand" evidence="10">
    <location>
        <begin position="161"/>
        <end position="166"/>
    </location>
</feature>
<feature type="helix" evidence="10">
    <location>
        <begin position="170"/>
        <end position="179"/>
    </location>
</feature>
<feature type="strand" evidence="10">
    <location>
        <begin position="180"/>
        <end position="182"/>
    </location>
</feature>
<feature type="strand" evidence="10">
    <location>
        <begin position="184"/>
        <end position="186"/>
    </location>
</feature>
<feature type="helix" evidence="10">
    <location>
        <begin position="190"/>
        <end position="194"/>
    </location>
</feature>
<feature type="strand" evidence="10">
    <location>
        <begin position="198"/>
        <end position="202"/>
    </location>
</feature>
<feature type="helix" evidence="10">
    <location>
        <begin position="213"/>
        <end position="215"/>
    </location>
</feature>
<feature type="strand" evidence="10">
    <location>
        <begin position="221"/>
        <end position="224"/>
    </location>
</feature>
<feature type="helix" evidence="10">
    <location>
        <begin position="237"/>
        <end position="242"/>
    </location>
</feature>
<feature type="strand" evidence="10">
    <location>
        <begin position="243"/>
        <end position="248"/>
    </location>
</feature>
<feature type="helix" evidence="10">
    <location>
        <begin position="250"/>
        <end position="256"/>
    </location>
</feature>
<feature type="helix" evidence="10">
    <location>
        <begin position="258"/>
        <end position="263"/>
    </location>
</feature>
<feature type="helix" evidence="10">
    <location>
        <begin position="271"/>
        <end position="275"/>
    </location>
</feature>
<feature type="strand" evidence="10">
    <location>
        <begin position="287"/>
        <end position="290"/>
    </location>
</feature>
<feature type="helix" evidence="10">
    <location>
        <begin position="295"/>
        <end position="311"/>
    </location>
</feature>
<name>CRYM_MOUSE</name>
<accession>O54983</accession>
<organism>
    <name type="scientific">Mus musculus</name>
    <name type="common">Mouse</name>
    <dbReference type="NCBI Taxonomy" id="10090"/>
    <lineage>
        <taxon>Eukaryota</taxon>
        <taxon>Metazoa</taxon>
        <taxon>Chordata</taxon>
        <taxon>Craniata</taxon>
        <taxon>Vertebrata</taxon>
        <taxon>Euteleostomi</taxon>
        <taxon>Mammalia</taxon>
        <taxon>Eutheria</taxon>
        <taxon>Euarchontoglires</taxon>
        <taxon>Glires</taxon>
        <taxon>Rodentia</taxon>
        <taxon>Myomorpha</taxon>
        <taxon>Muroidea</taxon>
        <taxon>Muridae</taxon>
        <taxon>Murinae</taxon>
        <taxon>Mus</taxon>
        <taxon>Mus</taxon>
    </lineage>
</organism>
<dbReference type="EC" id="1.5.1.25" evidence="1"/>
<dbReference type="EC" id="1.5.1.1" evidence="1"/>
<dbReference type="EMBL" id="AF039391">
    <property type="protein sequence ID" value="AAB94770.1"/>
    <property type="molecule type" value="mRNA"/>
</dbReference>
<dbReference type="EMBL" id="BC045159">
    <property type="protein sequence ID" value="AAH45159.1"/>
    <property type="molecule type" value="mRNA"/>
</dbReference>
<dbReference type="CCDS" id="CCDS21794.1"/>
<dbReference type="RefSeq" id="NP_057878.1">
    <property type="nucleotide sequence ID" value="NM_016669.2"/>
</dbReference>
<dbReference type="PDB" id="4BV8">
    <property type="method" value="X-ray"/>
    <property type="resolution" value="2.30 A"/>
    <property type="chains" value="A/B=1-313"/>
</dbReference>
<dbReference type="PDB" id="4BV9">
    <property type="method" value="X-ray"/>
    <property type="resolution" value="2.19 A"/>
    <property type="chains" value="A/B=1-313"/>
</dbReference>
<dbReference type="PDB" id="4BVA">
    <property type="method" value="X-ray"/>
    <property type="resolution" value="1.75 A"/>
    <property type="chains" value="A/B=1-313"/>
</dbReference>
<dbReference type="PDBsum" id="4BV8"/>
<dbReference type="PDBsum" id="4BV9"/>
<dbReference type="PDBsum" id="4BVA"/>
<dbReference type="SMR" id="O54983"/>
<dbReference type="BioGRID" id="198923">
    <property type="interactions" value="6"/>
</dbReference>
<dbReference type="FunCoup" id="O54983">
    <property type="interactions" value="1331"/>
</dbReference>
<dbReference type="IntAct" id="O54983">
    <property type="interactions" value="3"/>
</dbReference>
<dbReference type="MINT" id="O54983"/>
<dbReference type="STRING" id="10090.ENSMUSP00000033198"/>
<dbReference type="GlyGen" id="O54983">
    <property type="glycosylation" value="1 site, 1 O-linked glycan (1 site)"/>
</dbReference>
<dbReference type="iPTMnet" id="O54983"/>
<dbReference type="PhosphoSitePlus" id="O54983"/>
<dbReference type="SwissPalm" id="O54983"/>
<dbReference type="jPOST" id="O54983"/>
<dbReference type="PaxDb" id="10090-ENSMUSP00000033198"/>
<dbReference type="PeptideAtlas" id="O54983"/>
<dbReference type="ProteomicsDB" id="285339"/>
<dbReference type="Antibodypedia" id="12355">
    <property type="antibodies" value="324 antibodies from 28 providers"/>
</dbReference>
<dbReference type="DNASU" id="12971"/>
<dbReference type="Ensembl" id="ENSMUST00000033198.6">
    <property type="protein sequence ID" value="ENSMUSP00000033198.6"/>
    <property type="gene ID" value="ENSMUSG00000030905.6"/>
</dbReference>
<dbReference type="GeneID" id="12971"/>
<dbReference type="KEGG" id="mmu:12971"/>
<dbReference type="UCSC" id="uc009jmk.1">
    <property type="organism name" value="mouse"/>
</dbReference>
<dbReference type="AGR" id="MGI:102675"/>
<dbReference type="CTD" id="1428"/>
<dbReference type="MGI" id="MGI:102675">
    <property type="gene designation" value="Crym"/>
</dbReference>
<dbReference type="VEuPathDB" id="HostDB:ENSMUSG00000030905"/>
<dbReference type="eggNOG" id="KOG3007">
    <property type="taxonomic scope" value="Eukaryota"/>
</dbReference>
<dbReference type="GeneTree" id="ENSGT00390000000237"/>
<dbReference type="HOGENOM" id="CLU_042088_1_1_1"/>
<dbReference type="InParanoid" id="O54983"/>
<dbReference type="OMA" id="VKIVNVH"/>
<dbReference type="OrthoDB" id="41492at2759"/>
<dbReference type="PhylomeDB" id="O54983"/>
<dbReference type="TreeFam" id="TF105309"/>
<dbReference type="BRENDA" id="1.5.1.21">
    <property type="organism ID" value="3474"/>
</dbReference>
<dbReference type="Reactome" id="R-MMU-71064">
    <property type="pathway name" value="Lysine catabolism"/>
</dbReference>
<dbReference type="BioGRID-ORCS" id="12971">
    <property type="hits" value="0 hits in 77 CRISPR screens"/>
</dbReference>
<dbReference type="ChiTaRS" id="Crym">
    <property type="organism name" value="mouse"/>
</dbReference>
<dbReference type="EvolutionaryTrace" id="O54983"/>
<dbReference type="PRO" id="PR:O54983"/>
<dbReference type="Proteomes" id="UP000000589">
    <property type="component" value="Chromosome 7"/>
</dbReference>
<dbReference type="RNAct" id="O54983">
    <property type="molecule type" value="protein"/>
</dbReference>
<dbReference type="Bgee" id="ENSMUSG00000030905">
    <property type="expression patterns" value="Expressed in dentate gyrus of hippocampal formation granule cell and 189 other cell types or tissues"/>
</dbReference>
<dbReference type="ExpressionAtlas" id="O54983">
    <property type="expression patterns" value="baseline and differential"/>
</dbReference>
<dbReference type="GO" id="GO:0005829">
    <property type="term" value="C:cytosol"/>
    <property type="evidence" value="ECO:0007669"/>
    <property type="project" value="Ensembl"/>
</dbReference>
<dbReference type="GO" id="GO:0005739">
    <property type="term" value="C:mitochondrion"/>
    <property type="evidence" value="ECO:0000314"/>
    <property type="project" value="MGI"/>
</dbReference>
<dbReference type="GO" id="GO:0005634">
    <property type="term" value="C:nucleus"/>
    <property type="evidence" value="ECO:0000314"/>
    <property type="project" value="MGI"/>
</dbReference>
<dbReference type="GO" id="GO:0042562">
    <property type="term" value="F:hormone binding"/>
    <property type="evidence" value="ECO:0000315"/>
    <property type="project" value="MGI"/>
</dbReference>
<dbReference type="GO" id="GO:0050661">
    <property type="term" value="F:NADP binding"/>
    <property type="evidence" value="ECO:0007669"/>
    <property type="project" value="Ensembl"/>
</dbReference>
<dbReference type="GO" id="GO:0042803">
    <property type="term" value="F:protein homodimerization activity"/>
    <property type="evidence" value="ECO:0007669"/>
    <property type="project" value="Ensembl"/>
</dbReference>
<dbReference type="GO" id="GO:0047127">
    <property type="term" value="F:thiomorpholine-carboxylate dehydrogenase activity"/>
    <property type="evidence" value="ECO:0007669"/>
    <property type="project" value="UniProtKB-EC"/>
</dbReference>
<dbReference type="GO" id="GO:0070324">
    <property type="term" value="F:thyroid hormone binding"/>
    <property type="evidence" value="ECO:0007669"/>
    <property type="project" value="Ensembl"/>
</dbReference>
<dbReference type="GO" id="GO:0003714">
    <property type="term" value="F:transcription corepressor activity"/>
    <property type="evidence" value="ECO:0007669"/>
    <property type="project" value="Ensembl"/>
</dbReference>
<dbReference type="GO" id="GO:0000122">
    <property type="term" value="P:negative regulation of transcription by RNA polymerase II"/>
    <property type="evidence" value="ECO:0007669"/>
    <property type="project" value="Ensembl"/>
</dbReference>
<dbReference type="GO" id="GO:0007605">
    <property type="term" value="P:sensory perception of sound"/>
    <property type="evidence" value="ECO:0007669"/>
    <property type="project" value="Ensembl"/>
</dbReference>
<dbReference type="GO" id="GO:0042403">
    <property type="term" value="P:thyroid hormone metabolic process"/>
    <property type="evidence" value="ECO:0000315"/>
    <property type="project" value="MGI"/>
</dbReference>
<dbReference type="GO" id="GO:0070327">
    <property type="term" value="P:thyroid hormone transport"/>
    <property type="evidence" value="ECO:0007669"/>
    <property type="project" value="Ensembl"/>
</dbReference>
<dbReference type="FunFam" id="3.30.1780.10:FF:000001">
    <property type="entry name" value="Ketimine reductase mu-crystallin"/>
    <property type="match status" value="1"/>
</dbReference>
<dbReference type="FunFam" id="3.40.50.720:FF:000241">
    <property type="entry name" value="ketimine reductase mu-crystallin"/>
    <property type="match status" value="1"/>
</dbReference>
<dbReference type="Gene3D" id="3.40.50.720">
    <property type="entry name" value="NAD(P)-binding Rossmann-like Domain"/>
    <property type="match status" value="1"/>
</dbReference>
<dbReference type="Gene3D" id="3.30.1780.10">
    <property type="entry name" value="ornithine cyclodeaminase, domain 1"/>
    <property type="match status" value="1"/>
</dbReference>
<dbReference type="InterPro" id="IPR036291">
    <property type="entry name" value="NAD(P)-bd_dom_sf"/>
</dbReference>
<dbReference type="InterPro" id="IPR003462">
    <property type="entry name" value="ODC_Mu_crystall"/>
</dbReference>
<dbReference type="InterPro" id="IPR023401">
    <property type="entry name" value="ODC_N"/>
</dbReference>
<dbReference type="PANTHER" id="PTHR13812">
    <property type="entry name" value="KETIMINE REDUCTASE MU-CRYSTALLIN"/>
    <property type="match status" value="1"/>
</dbReference>
<dbReference type="PANTHER" id="PTHR13812:SF19">
    <property type="entry name" value="KETIMINE REDUCTASE MU-CRYSTALLIN"/>
    <property type="match status" value="1"/>
</dbReference>
<dbReference type="Pfam" id="PF02423">
    <property type="entry name" value="OCD_Mu_crystall"/>
    <property type="match status" value="1"/>
</dbReference>
<dbReference type="PIRSF" id="PIRSF001439">
    <property type="entry name" value="CryM"/>
    <property type="match status" value="1"/>
</dbReference>
<dbReference type="SUPFAM" id="SSF51735">
    <property type="entry name" value="NAD(P)-binding Rossmann-fold domains"/>
    <property type="match status" value="1"/>
</dbReference>
<gene>
    <name evidence="6" type="primary">Crym</name>
</gene>